<evidence type="ECO:0000255" key="1">
    <source>
        <dbReference type="HAMAP-Rule" id="MF_00365"/>
    </source>
</evidence>
<accession>Q6GKU1</accession>
<dbReference type="EMBL" id="BX571856">
    <property type="protein sequence ID" value="CAG39032.1"/>
    <property type="molecule type" value="Genomic_DNA"/>
</dbReference>
<dbReference type="RefSeq" id="WP_000775113.1">
    <property type="nucleotide sequence ID" value="NC_002952.2"/>
</dbReference>
<dbReference type="SMR" id="Q6GKU1"/>
<dbReference type="KEGG" id="sar:SAR0004"/>
<dbReference type="HOGENOM" id="CLU_040267_0_1_9"/>
<dbReference type="Proteomes" id="UP000000596">
    <property type="component" value="Chromosome"/>
</dbReference>
<dbReference type="GO" id="GO:0005737">
    <property type="term" value="C:cytoplasm"/>
    <property type="evidence" value="ECO:0007669"/>
    <property type="project" value="UniProtKB-SubCell"/>
</dbReference>
<dbReference type="GO" id="GO:0005524">
    <property type="term" value="F:ATP binding"/>
    <property type="evidence" value="ECO:0007669"/>
    <property type="project" value="UniProtKB-UniRule"/>
</dbReference>
<dbReference type="GO" id="GO:0003697">
    <property type="term" value="F:single-stranded DNA binding"/>
    <property type="evidence" value="ECO:0007669"/>
    <property type="project" value="UniProtKB-UniRule"/>
</dbReference>
<dbReference type="GO" id="GO:0006260">
    <property type="term" value="P:DNA replication"/>
    <property type="evidence" value="ECO:0007669"/>
    <property type="project" value="UniProtKB-UniRule"/>
</dbReference>
<dbReference type="GO" id="GO:0000731">
    <property type="term" value="P:DNA synthesis involved in DNA repair"/>
    <property type="evidence" value="ECO:0007669"/>
    <property type="project" value="TreeGrafter"/>
</dbReference>
<dbReference type="GO" id="GO:0006302">
    <property type="term" value="P:double-strand break repair"/>
    <property type="evidence" value="ECO:0007669"/>
    <property type="project" value="TreeGrafter"/>
</dbReference>
<dbReference type="GO" id="GO:0009432">
    <property type="term" value="P:SOS response"/>
    <property type="evidence" value="ECO:0007669"/>
    <property type="project" value="UniProtKB-UniRule"/>
</dbReference>
<dbReference type="CDD" id="cd03242">
    <property type="entry name" value="ABC_RecF"/>
    <property type="match status" value="1"/>
</dbReference>
<dbReference type="FunFam" id="1.20.1050.90:FF:000002">
    <property type="entry name" value="DNA replication and repair protein RecF"/>
    <property type="match status" value="1"/>
</dbReference>
<dbReference type="Gene3D" id="3.40.50.300">
    <property type="entry name" value="P-loop containing nucleotide triphosphate hydrolases"/>
    <property type="match status" value="1"/>
</dbReference>
<dbReference type="Gene3D" id="1.20.1050.90">
    <property type="entry name" value="RecF/RecN/SMC, N-terminal domain"/>
    <property type="match status" value="1"/>
</dbReference>
<dbReference type="HAMAP" id="MF_00365">
    <property type="entry name" value="RecF"/>
    <property type="match status" value="1"/>
</dbReference>
<dbReference type="InterPro" id="IPR001238">
    <property type="entry name" value="DNA-binding_RecF"/>
</dbReference>
<dbReference type="InterPro" id="IPR018078">
    <property type="entry name" value="DNA-binding_RecF_CS"/>
</dbReference>
<dbReference type="InterPro" id="IPR027417">
    <property type="entry name" value="P-loop_NTPase"/>
</dbReference>
<dbReference type="InterPro" id="IPR003395">
    <property type="entry name" value="RecF/RecN/SMC_N"/>
</dbReference>
<dbReference type="InterPro" id="IPR042174">
    <property type="entry name" value="RecF_2"/>
</dbReference>
<dbReference type="NCBIfam" id="TIGR00611">
    <property type="entry name" value="recf"/>
    <property type="match status" value="1"/>
</dbReference>
<dbReference type="PANTHER" id="PTHR32182">
    <property type="entry name" value="DNA REPLICATION AND REPAIR PROTEIN RECF"/>
    <property type="match status" value="1"/>
</dbReference>
<dbReference type="PANTHER" id="PTHR32182:SF0">
    <property type="entry name" value="DNA REPLICATION AND REPAIR PROTEIN RECF"/>
    <property type="match status" value="1"/>
</dbReference>
<dbReference type="Pfam" id="PF02463">
    <property type="entry name" value="SMC_N"/>
    <property type="match status" value="1"/>
</dbReference>
<dbReference type="SUPFAM" id="SSF52540">
    <property type="entry name" value="P-loop containing nucleoside triphosphate hydrolases"/>
    <property type="match status" value="1"/>
</dbReference>
<dbReference type="PROSITE" id="PS00617">
    <property type="entry name" value="RECF_1"/>
    <property type="match status" value="1"/>
</dbReference>
<dbReference type="PROSITE" id="PS00618">
    <property type="entry name" value="RECF_2"/>
    <property type="match status" value="1"/>
</dbReference>
<organism>
    <name type="scientific">Staphylococcus aureus (strain MRSA252)</name>
    <dbReference type="NCBI Taxonomy" id="282458"/>
    <lineage>
        <taxon>Bacteria</taxon>
        <taxon>Bacillati</taxon>
        <taxon>Bacillota</taxon>
        <taxon>Bacilli</taxon>
        <taxon>Bacillales</taxon>
        <taxon>Staphylococcaceae</taxon>
        <taxon>Staphylococcus</taxon>
    </lineage>
</organism>
<keyword id="KW-0067">ATP-binding</keyword>
<keyword id="KW-0963">Cytoplasm</keyword>
<keyword id="KW-0227">DNA damage</keyword>
<keyword id="KW-0234">DNA repair</keyword>
<keyword id="KW-0235">DNA replication</keyword>
<keyword id="KW-0238">DNA-binding</keyword>
<keyword id="KW-0547">Nucleotide-binding</keyword>
<keyword id="KW-0742">SOS response</keyword>
<gene>
    <name evidence="1" type="primary">recF</name>
    <name type="ordered locus">SAR0004</name>
</gene>
<feature type="chain" id="PRO_0000196459" description="DNA replication and repair protein RecF">
    <location>
        <begin position="1"/>
        <end position="370"/>
    </location>
</feature>
<feature type="binding site" evidence="1">
    <location>
        <begin position="30"/>
        <end position="37"/>
    </location>
    <ligand>
        <name>ATP</name>
        <dbReference type="ChEBI" id="CHEBI:30616"/>
    </ligand>
</feature>
<reference key="1">
    <citation type="journal article" date="2004" name="Proc. Natl. Acad. Sci. U.S.A.">
        <title>Complete genomes of two clinical Staphylococcus aureus strains: evidence for the rapid evolution of virulence and drug resistance.</title>
        <authorList>
            <person name="Holden M.T.G."/>
            <person name="Feil E.J."/>
            <person name="Lindsay J.A."/>
            <person name="Peacock S.J."/>
            <person name="Day N.P.J."/>
            <person name="Enright M.C."/>
            <person name="Foster T.J."/>
            <person name="Moore C.E."/>
            <person name="Hurst L."/>
            <person name="Atkin R."/>
            <person name="Barron A."/>
            <person name="Bason N."/>
            <person name="Bentley S.D."/>
            <person name="Chillingworth C."/>
            <person name="Chillingworth T."/>
            <person name="Churcher C."/>
            <person name="Clark L."/>
            <person name="Corton C."/>
            <person name="Cronin A."/>
            <person name="Doggett J."/>
            <person name="Dowd L."/>
            <person name="Feltwell T."/>
            <person name="Hance Z."/>
            <person name="Harris B."/>
            <person name="Hauser H."/>
            <person name="Holroyd S."/>
            <person name="Jagels K."/>
            <person name="James K.D."/>
            <person name="Lennard N."/>
            <person name="Line A."/>
            <person name="Mayes R."/>
            <person name="Moule S."/>
            <person name="Mungall K."/>
            <person name="Ormond D."/>
            <person name="Quail M.A."/>
            <person name="Rabbinowitsch E."/>
            <person name="Rutherford K.M."/>
            <person name="Sanders M."/>
            <person name="Sharp S."/>
            <person name="Simmonds M."/>
            <person name="Stevens K."/>
            <person name="Whitehead S."/>
            <person name="Barrell B.G."/>
            <person name="Spratt B.G."/>
            <person name="Parkhill J."/>
        </authorList>
    </citation>
    <scope>NUCLEOTIDE SEQUENCE [LARGE SCALE GENOMIC DNA]</scope>
    <source>
        <strain>MRSA252</strain>
    </source>
</reference>
<name>RECF_STAAR</name>
<protein>
    <recommendedName>
        <fullName evidence="1">DNA replication and repair protein RecF</fullName>
    </recommendedName>
</protein>
<proteinExistence type="inferred from homology"/>
<comment type="function">
    <text evidence="1">The RecF protein is involved in DNA metabolism; it is required for DNA replication and normal SOS inducibility. RecF binds preferentially to single-stranded, linear DNA. It also seems to bind ATP.</text>
</comment>
<comment type="subcellular location">
    <subcellularLocation>
        <location evidence="1">Cytoplasm</location>
    </subcellularLocation>
</comment>
<comment type="similarity">
    <text evidence="1">Belongs to the RecF family.</text>
</comment>
<sequence>MKLNTLQLENYRNYDEVTLKCHPDVNILIGENAQGKTNLLESIYTLALAKSHRTSNDKELIRFNADYAKIEGELSYRHGTMPLTMFITKKGKQVKVNHLEQSRLTQYIGHLNVVLFAPEDLNIVKGSPQIRRRFIDMELGQISAVYLNDLAQYQRILKQKNNYLKQLQLGQKKDLTMLEVLNQQFAEYAMKVTDKRAHFIQELESLAKPIHAGITNDKEALSLNYLPSLKFDYAQNEAARLEEIMSILSDNMQREKERGISLFGPHRDDISFDVNGMDAQTYGSQGQQRTTALSIKLAEIELMNIEVGEYPILLLDDVLSELDDSRQTHLLSTIQHKVQTFVTTTSVDGIDHEIMNNAKLYRINQGEIIK</sequence>